<comment type="similarity">
    <text evidence="1">Belongs to the UPF0597 family.</text>
</comment>
<feature type="chain" id="PRO_0000339839" description="UPF0597 protein YhaM">
    <location>
        <begin position="1"/>
        <end position="436"/>
    </location>
</feature>
<proteinExistence type="inferred from homology"/>
<gene>
    <name evidence="1" type="primary">yhaM</name>
    <name type="ordered locus">SCH_3184</name>
</gene>
<name>YHAM_SALCH</name>
<protein>
    <recommendedName>
        <fullName evidence="1">UPF0597 protein YhaM</fullName>
    </recommendedName>
</protein>
<reference key="1">
    <citation type="journal article" date="2005" name="Nucleic Acids Res.">
        <title>The genome sequence of Salmonella enterica serovar Choleraesuis, a highly invasive and resistant zoonotic pathogen.</title>
        <authorList>
            <person name="Chiu C.-H."/>
            <person name="Tang P."/>
            <person name="Chu C."/>
            <person name="Hu S."/>
            <person name="Bao Q."/>
            <person name="Yu J."/>
            <person name="Chou Y.-Y."/>
            <person name="Wang H.-S."/>
            <person name="Lee Y.-S."/>
        </authorList>
    </citation>
    <scope>NUCLEOTIDE SEQUENCE [LARGE SCALE GENOMIC DNA]</scope>
    <source>
        <strain>SC-B67</strain>
    </source>
</reference>
<accession>Q57JM2</accession>
<organism>
    <name type="scientific">Salmonella choleraesuis (strain SC-B67)</name>
    <dbReference type="NCBI Taxonomy" id="321314"/>
    <lineage>
        <taxon>Bacteria</taxon>
        <taxon>Pseudomonadati</taxon>
        <taxon>Pseudomonadota</taxon>
        <taxon>Gammaproteobacteria</taxon>
        <taxon>Enterobacterales</taxon>
        <taxon>Enterobacteriaceae</taxon>
        <taxon>Salmonella</taxon>
    </lineage>
</organism>
<evidence type="ECO:0000255" key="1">
    <source>
        <dbReference type="HAMAP-Rule" id="MF_01845"/>
    </source>
</evidence>
<dbReference type="EMBL" id="AE017220">
    <property type="protein sequence ID" value="AAX67090.1"/>
    <property type="molecule type" value="Genomic_DNA"/>
</dbReference>
<dbReference type="RefSeq" id="WP_001540946.1">
    <property type="nucleotide sequence ID" value="NC_006905.1"/>
</dbReference>
<dbReference type="SMR" id="Q57JM2"/>
<dbReference type="KEGG" id="sec:SCH_3184"/>
<dbReference type="HOGENOM" id="CLU_051840_0_0_6"/>
<dbReference type="Proteomes" id="UP000000538">
    <property type="component" value="Chromosome"/>
</dbReference>
<dbReference type="GO" id="GO:0080146">
    <property type="term" value="F:L-cysteine desulfhydrase activity"/>
    <property type="evidence" value="ECO:0007669"/>
    <property type="project" value="TreeGrafter"/>
</dbReference>
<dbReference type="GO" id="GO:0019450">
    <property type="term" value="P:L-cysteine catabolic process to pyruvate"/>
    <property type="evidence" value="ECO:0007669"/>
    <property type="project" value="TreeGrafter"/>
</dbReference>
<dbReference type="HAMAP" id="MF_01845">
    <property type="entry name" value="UPF0597"/>
    <property type="match status" value="1"/>
</dbReference>
<dbReference type="InterPro" id="IPR005130">
    <property type="entry name" value="Ser_deHydtase-like_asu"/>
</dbReference>
<dbReference type="InterPro" id="IPR021144">
    <property type="entry name" value="UPF0597"/>
</dbReference>
<dbReference type="PANTHER" id="PTHR30501">
    <property type="entry name" value="UPF0597 PROTEIN YHAM"/>
    <property type="match status" value="1"/>
</dbReference>
<dbReference type="PANTHER" id="PTHR30501:SF2">
    <property type="entry name" value="UPF0597 PROTEIN YHAM"/>
    <property type="match status" value="1"/>
</dbReference>
<dbReference type="Pfam" id="PF03313">
    <property type="entry name" value="SDH_alpha"/>
    <property type="match status" value="1"/>
</dbReference>
<dbReference type="PIRSF" id="PIRSF006054">
    <property type="entry name" value="UCP006054"/>
    <property type="match status" value="1"/>
</dbReference>
<sequence length="436" mass="45181">MFESKINPLWQSFILAVQEEVKPALGCTEPISLALAAAAAAAELDGTVERIDAWVSPNLMKNGMGVTVPGTGMVGLPIAAALGVLGGDAKAGLEVLKDASAKAVADAKAMLAAGHVAVMLQEPCNDILFSRAKVYSGDSWACVTIVGDHTNIVRIETDKGVVFTQADNAQEEEKTSPLGVLSHTSLEEILAFVNAVPFDAIRFILDAARLNGALSQEGLRGSWGLHIGSTLAKQCDRGLLAKDLSTAILIRTSAASDARMGGATLPAMSNSGSGNQGITATVPVMVVAEHVGADDERLARALMLSHLSAIYIHHQLPRLSALCAATTAAMGAAAGMAWLIDGRYDTIAMAISSMIGDVSGMICDGASNSCAMKVSTSASAAWKALLMALDDTAVTGNEGIVAHNVEQSIANLCSLACRSMQQTDKQIIEIMASKAH</sequence>